<reference key="1">
    <citation type="submission" date="2007-05" db="EMBL/GenBank/DDBJ databases">
        <title>Complete sequence of chromosome of Psychrobacter sp. PRwf-1.</title>
        <authorList>
            <consortium name="US DOE Joint Genome Institute"/>
            <person name="Copeland A."/>
            <person name="Lucas S."/>
            <person name="Lapidus A."/>
            <person name="Barry K."/>
            <person name="Detter J.C."/>
            <person name="Glavina del Rio T."/>
            <person name="Hammon N."/>
            <person name="Israni S."/>
            <person name="Dalin E."/>
            <person name="Tice H."/>
            <person name="Pitluck S."/>
            <person name="Chain P."/>
            <person name="Malfatti S."/>
            <person name="Shin M."/>
            <person name="Vergez L."/>
            <person name="Schmutz J."/>
            <person name="Larimer F."/>
            <person name="Land M."/>
            <person name="Hauser L."/>
            <person name="Kyrpides N."/>
            <person name="Kim E."/>
            <person name="Tiedje J."/>
            <person name="Richardson P."/>
        </authorList>
    </citation>
    <scope>NUCLEOTIDE SEQUENCE [LARGE SCALE GENOMIC DNA]</scope>
    <source>
        <strain>PRwf-1</strain>
    </source>
</reference>
<accession>A5WG58</accession>
<proteinExistence type="inferred from homology"/>
<name>SYM_PSYWF</name>
<feature type="chain" id="PRO_0000331880" description="Methionine--tRNA ligase">
    <location>
        <begin position="1"/>
        <end position="697"/>
    </location>
</feature>
<feature type="domain" description="tRNA-binding" evidence="1">
    <location>
        <begin position="595"/>
        <end position="697"/>
    </location>
</feature>
<feature type="short sequence motif" description="'HIGH' region">
    <location>
        <begin position="11"/>
        <end position="21"/>
    </location>
</feature>
<feature type="short sequence motif" description="'KMSKS' region">
    <location>
        <begin position="343"/>
        <end position="347"/>
    </location>
</feature>
<feature type="binding site" evidence="1">
    <location>
        <position position="142"/>
    </location>
    <ligand>
        <name>Zn(2+)</name>
        <dbReference type="ChEBI" id="CHEBI:29105"/>
    </ligand>
</feature>
<feature type="binding site" evidence="1">
    <location>
        <position position="145"/>
    </location>
    <ligand>
        <name>Zn(2+)</name>
        <dbReference type="ChEBI" id="CHEBI:29105"/>
    </ligand>
</feature>
<feature type="binding site" evidence="1">
    <location>
        <position position="155"/>
    </location>
    <ligand>
        <name>Zn(2+)</name>
        <dbReference type="ChEBI" id="CHEBI:29105"/>
    </ligand>
</feature>
<feature type="binding site" evidence="1">
    <location>
        <position position="158"/>
    </location>
    <ligand>
        <name>Zn(2+)</name>
        <dbReference type="ChEBI" id="CHEBI:29105"/>
    </ligand>
</feature>
<feature type="binding site" evidence="1">
    <location>
        <position position="346"/>
    </location>
    <ligand>
        <name>ATP</name>
        <dbReference type="ChEBI" id="CHEBI:30616"/>
    </ligand>
</feature>
<keyword id="KW-0030">Aminoacyl-tRNA synthetase</keyword>
<keyword id="KW-0067">ATP-binding</keyword>
<keyword id="KW-0963">Cytoplasm</keyword>
<keyword id="KW-0436">Ligase</keyword>
<keyword id="KW-0479">Metal-binding</keyword>
<keyword id="KW-0547">Nucleotide-binding</keyword>
<keyword id="KW-0648">Protein biosynthesis</keyword>
<keyword id="KW-0694">RNA-binding</keyword>
<keyword id="KW-0820">tRNA-binding</keyword>
<keyword id="KW-0862">Zinc</keyword>
<protein>
    <recommendedName>
        <fullName evidence="1">Methionine--tRNA ligase</fullName>
        <ecNumber evidence="1">6.1.1.10</ecNumber>
    </recommendedName>
    <alternativeName>
        <fullName evidence="1">Methionyl-tRNA synthetase</fullName>
        <shortName evidence="1">MetRS</shortName>
    </alternativeName>
</protein>
<sequence length="697" mass="78752">MRQILVTSALPYANGPIHLGHLVEYIQTDIWVRAMKAQSHQVTYVCADDAHGTAIMLKAEANGVTPEQQIATVKASHEADFSKFLIGFDNYHSTHSEENRELSELIYRRLNGEGHISTKDVEQLFDPEKGLFLADRFVKGECPECGAQDQYGDNCEVCGTTYNATELKNPYSTLSGATPVLRTSKHYFFNLPEFESFLKQWTKDEGRLQPSVSNKLQEWFEAGLASWDISRDAPYFGFKIPDTPEGEPDKYFYVWLDAPVGYMASFKNLCKQRQGSTDPQQPELSFDDYWLQENQHKTELYHFIGKDIVYFHALFWPAMLAGSEYRTPTGVFAHGFLMVNGDKMSKSRGTFIQAETFAKHLNPEYLRYYFASKLSEKVEDINLDFADFMQKVNSDMVGKVVNIASRSAGFIAKKYDGMLSDSCAEPELLNEIVRAGEEIATAYENREFSRAMRLIMQCADKANEYIDSKKPWAMAKEEGREQEVQDVCTVAINIFRQLMVYLAPVLPELTDNAKAFLNIDDLSFASRHELLLGHKINKFKPLMQRIEQAQIDAMVADSKQDLLATPTAQADNVAKAAQASETNDQQDSDYIEFDDFMKVEMTVAQVLECNHVEGADKLLQFTLDIGKEQPINVFSGIRKFYEPEQLANKKVICVTNLAPRKMKFGVSEGMILSSGDPKTGLVVITLPDECKVGDKLA</sequence>
<gene>
    <name evidence="1" type="primary">metG</name>
    <name type="ordered locus">PsycPRwf_1709</name>
</gene>
<evidence type="ECO:0000255" key="1">
    <source>
        <dbReference type="HAMAP-Rule" id="MF_00098"/>
    </source>
</evidence>
<comment type="function">
    <text evidence="1">Is required not only for elongation of protein synthesis but also for the initiation of all mRNA translation through initiator tRNA(fMet) aminoacylation.</text>
</comment>
<comment type="catalytic activity">
    <reaction evidence="1">
        <text>tRNA(Met) + L-methionine + ATP = L-methionyl-tRNA(Met) + AMP + diphosphate</text>
        <dbReference type="Rhea" id="RHEA:13481"/>
        <dbReference type="Rhea" id="RHEA-COMP:9667"/>
        <dbReference type="Rhea" id="RHEA-COMP:9698"/>
        <dbReference type="ChEBI" id="CHEBI:30616"/>
        <dbReference type="ChEBI" id="CHEBI:33019"/>
        <dbReference type="ChEBI" id="CHEBI:57844"/>
        <dbReference type="ChEBI" id="CHEBI:78442"/>
        <dbReference type="ChEBI" id="CHEBI:78530"/>
        <dbReference type="ChEBI" id="CHEBI:456215"/>
        <dbReference type="EC" id="6.1.1.10"/>
    </reaction>
</comment>
<comment type="cofactor">
    <cofactor evidence="1">
        <name>Zn(2+)</name>
        <dbReference type="ChEBI" id="CHEBI:29105"/>
    </cofactor>
    <text evidence="1">Binds 1 zinc ion per subunit.</text>
</comment>
<comment type="subunit">
    <text evidence="1">Homodimer.</text>
</comment>
<comment type="subcellular location">
    <subcellularLocation>
        <location evidence="1">Cytoplasm</location>
    </subcellularLocation>
</comment>
<comment type="similarity">
    <text evidence="1">Belongs to the class-I aminoacyl-tRNA synthetase family. MetG type 1 subfamily.</text>
</comment>
<dbReference type="EC" id="6.1.1.10" evidence="1"/>
<dbReference type="EMBL" id="CP000713">
    <property type="protein sequence ID" value="ABQ94649.1"/>
    <property type="molecule type" value="Genomic_DNA"/>
</dbReference>
<dbReference type="SMR" id="A5WG58"/>
<dbReference type="STRING" id="349106.PsycPRwf_1709"/>
<dbReference type="KEGG" id="prw:PsycPRwf_1709"/>
<dbReference type="eggNOG" id="COG0073">
    <property type="taxonomic scope" value="Bacteria"/>
</dbReference>
<dbReference type="eggNOG" id="COG0143">
    <property type="taxonomic scope" value="Bacteria"/>
</dbReference>
<dbReference type="HOGENOM" id="CLU_009710_7_0_6"/>
<dbReference type="GO" id="GO:0005829">
    <property type="term" value="C:cytosol"/>
    <property type="evidence" value="ECO:0007669"/>
    <property type="project" value="TreeGrafter"/>
</dbReference>
<dbReference type="GO" id="GO:0005524">
    <property type="term" value="F:ATP binding"/>
    <property type="evidence" value="ECO:0007669"/>
    <property type="project" value="UniProtKB-UniRule"/>
</dbReference>
<dbReference type="GO" id="GO:0046872">
    <property type="term" value="F:metal ion binding"/>
    <property type="evidence" value="ECO:0007669"/>
    <property type="project" value="UniProtKB-KW"/>
</dbReference>
<dbReference type="GO" id="GO:0004825">
    <property type="term" value="F:methionine-tRNA ligase activity"/>
    <property type="evidence" value="ECO:0007669"/>
    <property type="project" value="UniProtKB-UniRule"/>
</dbReference>
<dbReference type="GO" id="GO:0000049">
    <property type="term" value="F:tRNA binding"/>
    <property type="evidence" value="ECO:0007669"/>
    <property type="project" value="UniProtKB-KW"/>
</dbReference>
<dbReference type="GO" id="GO:0006431">
    <property type="term" value="P:methionyl-tRNA aminoacylation"/>
    <property type="evidence" value="ECO:0007669"/>
    <property type="project" value="UniProtKB-UniRule"/>
</dbReference>
<dbReference type="CDD" id="cd07957">
    <property type="entry name" value="Anticodon_Ia_Met"/>
    <property type="match status" value="1"/>
</dbReference>
<dbReference type="CDD" id="cd00814">
    <property type="entry name" value="MetRS_core"/>
    <property type="match status" value="1"/>
</dbReference>
<dbReference type="CDD" id="cd02800">
    <property type="entry name" value="tRNA_bind_EcMetRS_like"/>
    <property type="match status" value="1"/>
</dbReference>
<dbReference type="FunFam" id="1.10.730.10:FF:000005">
    <property type="entry name" value="Methionine--tRNA ligase"/>
    <property type="match status" value="1"/>
</dbReference>
<dbReference type="FunFam" id="2.20.28.20:FF:000001">
    <property type="entry name" value="Methionine--tRNA ligase"/>
    <property type="match status" value="1"/>
</dbReference>
<dbReference type="FunFam" id="2.40.50.140:FF:000042">
    <property type="entry name" value="Methionine--tRNA ligase"/>
    <property type="match status" value="1"/>
</dbReference>
<dbReference type="Gene3D" id="3.40.50.620">
    <property type="entry name" value="HUPs"/>
    <property type="match status" value="1"/>
</dbReference>
<dbReference type="Gene3D" id="1.10.730.10">
    <property type="entry name" value="Isoleucyl-tRNA Synthetase, Domain 1"/>
    <property type="match status" value="1"/>
</dbReference>
<dbReference type="Gene3D" id="2.20.28.20">
    <property type="entry name" value="Methionyl-tRNA synthetase, Zn-domain"/>
    <property type="match status" value="1"/>
</dbReference>
<dbReference type="Gene3D" id="2.40.50.140">
    <property type="entry name" value="Nucleic acid-binding proteins"/>
    <property type="match status" value="1"/>
</dbReference>
<dbReference type="HAMAP" id="MF_00098">
    <property type="entry name" value="Met_tRNA_synth_type1"/>
    <property type="match status" value="1"/>
</dbReference>
<dbReference type="InterPro" id="IPR001412">
    <property type="entry name" value="aa-tRNA-synth_I_CS"/>
</dbReference>
<dbReference type="InterPro" id="IPR041872">
    <property type="entry name" value="Anticodon_Met"/>
</dbReference>
<dbReference type="InterPro" id="IPR013155">
    <property type="entry name" value="M/V/L/I-tRNA-synth_anticd-bd"/>
</dbReference>
<dbReference type="InterPro" id="IPR004495">
    <property type="entry name" value="Met-tRNA-synth_bsu_C"/>
</dbReference>
<dbReference type="InterPro" id="IPR023458">
    <property type="entry name" value="Met-tRNA_ligase_1"/>
</dbReference>
<dbReference type="InterPro" id="IPR014758">
    <property type="entry name" value="Met-tRNA_synth"/>
</dbReference>
<dbReference type="InterPro" id="IPR015413">
    <property type="entry name" value="Methionyl/Leucyl_tRNA_Synth"/>
</dbReference>
<dbReference type="InterPro" id="IPR033911">
    <property type="entry name" value="MetRS_core"/>
</dbReference>
<dbReference type="InterPro" id="IPR029038">
    <property type="entry name" value="MetRS_Zn"/>
</dbReference>
<dbReference type="InterPro" id="IPR012340">
    <property type="entry name" value="NA-bd_OB-fold"/>
</dbReference>
<dbReference type="InterPro" id="IPR014729">
    <property type="entry name" value="Rossmann-like_a/b/a_fold"/>
</dbReference>
<dbReference type="InterPro" id="IPR002547">
    <property type="entry name" value="tRNA-bd_dom"/>
</dbReference>
<dbReference type="InterPro" id="IPR009080">
    <property type="entry name" value="tRNAsynth_Ia_anticodon-bd"/>
</dbReference>
<dbReference type="NCBIfam" id="TIGR00398">
    <property type="entry name" value="metG"/>
    <property type="match status" value="1"/>
</dbReference>
<dbReference type="NCBIfam" id="TIGR00399">
    <property type="entry name" value="metG_C_term"/>
    <property type="match status" value="1"/>
</dbReference>
<dbReference type="NCBIfam" id="NF001100">
    <property type="entry name" value="PRK00133.1"/>
    <property type="match status" value="1"/>
</dbReference>
<dbReference type="PANTHER" id="PTHR45765">
    <property type="entry name" value="METHIONINE--TRNA LIGASE"/>
    <property type="match status" value="1"/>
</dbReference>
<dbReference type="PANTHER" id="PTHR45765:SF1">
    <property type="entry name" value="METHIONINE--TRNA LIGASE, CYTOPLASMIC"/>
    <property type="match status" value="1"/>
</dbReference>
<dbReference type="Pfam" id="PF08264">
    <property type="entry name" value="Anticodon_1"/>
    <property type="match status" value="1"/>
</dbReference>
<dbReference type="Pfam" id="PF09334">
    <property type="entry name" value="tRNA-synt_1g"/>
    <property type="match status" value="1"/>
</dbReference>
<dbReference type="Pfam" id="PF01588">
    <property type="entry name" value="tRNA_bind"/>
    <property type="match status" value="1"/>
</dbReference>
<dbReference type="PRINTS" id="PR01041">
    <property type="entry name" value="TRNASYNTHMET"/>
</dbReference>
<dbReference type="SUPFAM" id="SSF47323">
    <property type="entry name" value="Anticodon-binding domain of a subclass of class I aminoacyl-tRNA synthetases"/>
    <property type="match status" value="1"/>
</dbReference>
<dbReference type="SUPFAM" id="SSF57770">
    <property type="entry name" value="Methionyl-tRNA synthetase (MetRS), Zn-domain"/>
    <property type="match status" value="1"/>
</dbReference>
<dbReference type="SUPFAM" id="SSF50249">
    <property type="entry name" value="Nucleic acid-binding proteins"/>
    <property type="match status" value="1"/>
</dbReference>
<dbReference type="SUPFAM" id="SSF52374">
    <property type="entry name" value="Nucleotidylyl transferase"/>
    <property type="match status" value="1"/>
</dbReference>
<dbReference type="PROSITE" id="PS00178">
    <property type="entry name" value="AA_TRNA_LIGASE_I"/>
    <property type="match status" value="1"/>
</dbReference>
<dbReference type="PROSITE" id="PS50886">
    <property type="entry name" value="TRBD"/>
    <property type="match status" value="1"/>
</dbReference>
<organism>
    <name type="scientific">Psychrobacter sp. (strain PRwf-1)</name>
    <dbReference type="NCBI Taxonomy" id="349106"/>
    <lineage>
        <taxon>Bacteria</taxon>
        <taxon>Pseudomonadati</taxon>
        <taxon>Pseudomonadota</taxon>
        <taxon>Gammaproteobacteria</taxon>
        <taxon>Moraxellales</taxon>
        <taxon>Moraxellaceae</taxon>
        <taxon>Psychrobacter</taxon>
    </lineage>
</organism>